<organism>
    <name type="scientific">Enterobacter sp. (strain 638)</name>
    <dbReference type="NCBI Taxonomy" id="399742"/>
    <lineage>
        <taxon>Bacteria</taxon>
        <taxon>Pseudomonadati</taxon>
        <taxon>Pseudomonadota</taxon>
        <taxon>Gammaproteobacteria</taxon>
        <taxon>Enterobacterales</taxon>
        <taxon>Enterobacteriaceae</taxon>
        <taxon>Enterobacter</taxon>
    </lineage>
</organism>
<proteinExistence type="inferred from homology"/>
<comment type="function">
    <text evidence="1">Necessary for formate dehydrogenase activity.</text>
</comment>
<comment type="subcellular location">
    <subcellularLocation>
        <location evidence="1">Cytoplasm</location>
    </subcellularLocation>
</comment>
<comment type="similarity">
    <text evidence="1">Belongs to the FdhE family.</text>
</comment>
<evidence type="ECO:0000255" key="1">
    <source>
        <dbReference type="HAMAP-Rule" id="MF_00611"/>
    </source>
</evidence>
<sequence>MSIRIIPQDELGSSEKRTADYIPPLLFPRLKNLYNRRAERLRELAENNPLGDFLRFAALIAHAQEVVLYDHPLQIDLTARIKEANDQGKPPLDIHVLPRDKHWHTLLQSLIAELKPEMSGPALAVIENLEKASALELEEMASALFAADFALVSSDKAPFIWAALSLYWAQMASLIPGKARAEYGEARQFCPVCGSMPVTSMVQIGTTQGLRYLHCNLCETEWHVVRIKCSNCEQTRDLNYWSLENENAAVKAESCGDCGTYLKILYQEKDPKVEAVADDLATLVLDAHMEQEGFARSSINPFLFPGEGE</sequence>
<dbReference type="EMBL" id="CP000653">
    <property type="protein sequence ID" value="ABP62743.1"/>
    <property type="molecule type" value="Genomic_DNA"/>
</dbReference>
<dbReference type="RefSeq" id="WP_015961047.1">
    <property type="nucleotide sequence ID" value="NC_009436.1"/>
</dbReference>
<dbReference type="SMR" id="A4WGB3"/>
<dbReference type="STRING" id="399742.Ent638_4088"/>
<dbReference type="KEGG" id="ent:Ent638_4088"/>
<dbReference type="eggNOG" id="COG3058">
    <property type="taxonomic scope" value="Bacteria"/>
</dbReference>
<dbReference type="HOGENOM" id="CLU_055275_0_0_6"/>
<dbReference type="OrthoDB" id="9794151at2"/>
<dbReference type="Proteomes" id="UP000000230">
    <property type="component" value="Chromosome"/>
</dbReference>
<dbReference type="GO" id="GO:0005829">
    <property type="term" value="C:cytosol"/>
    <property type="evidence" value="ECO:0007669"/>
    <property type="project" value="TreeGrafter"/>
</dbReference>
<dbReference type="GO" id="GO:0008199">
    <property type="term" value="F:ferric iron binding"/>
    <property type="evidence" value="ECO:0007669"/>
    <property type="project" value="TreeGrafter"/>
</dbReference>
<dbReference type="GO" id="GO:0051604">
    <property type="term" value="P:protein maturation"/>
    <property type="evidence" value="ECO:0007669"/>
    <property type="project" value="TreeGrafter"/>
</dbReference>
<dbReference type="CDD" id="cd16341">
    <property type="entry name" value="FdhE"/>
    <property type="match status" value="1"/>
</dbReference>
<dbReference type="FunFam" id="3.90.1670.10:FF:000001">
    <property type="entry name" value="Protein FdhE"/>
    <property type="match status" value="1"/>
</dbReference>
<dbReference type="Gene3D" id="3.90.1670.10">
    <property type="entry name" value="FdhE-like domain"/>
    <property type="match status" value="1"/>
</dbReference>
<dbReference type="HAMAP" id="MF_00611">
    <property type="entry name" value="FdeH"/>
    <property type="match status" value="1"/>
</dbReference>
<dbReference type="InterPro" id="IPR024064">
    <property type="entry name" value="FdhE-like_sf"/>
</dbReference>
<dbReference type="InterPro" id="IPR056796">
    <property type="entry name" value="FdhE_C"/>
</dbReference>
<dbReference type="InterPro" id="IPR056797">
    <property type="entry name" value="FdhE_central"/>
</dbReference>
<dbReference type="InterPro" id="IPR056774">
    <property type="entry name" value="FdhE_N"/>
</dbReference>
<dbReference type="InterPro" id="IPR006452">
    <property type="entry name" value="Formate_DH_accessory"/>
</dbReference>
<dbReference type="NCBIfam" id="TIGR01562">
    <property type="entry name" value="FdhE"/>
    <property type="match status" value="1"/>
</dbReference>
<dbReference type="NCBIfam" id="NF002925">
    <property type="entry name" value="PRK03564.1"/>
    <property type="match status" value="1"/>
</dbReference>
<dbReference type="PANTHER" id="PTHR37689">
    <property type="entry name" value="PROTEIN FDHE"/>
    <property type="match status" value="1"/>
</dbReference>
<dbReference type="PANTHER" id="PTHR37689:SF1">
    <property type="entry name" value="PROTEIN FDHE"/>
    <property type="match status" value="1"/>
</dbReference>
<dbReference type="Pfam" id="PF24860">
    <property type="entry name" value="FdhE_C"/>
    <property type="match status" value="1"/>
</dbReference>
<dbReference type="Pfam" id="PF24859">
    <property type="entry name" value="FdhE_central"/>
    <property type="match status" value="1"/>
</dbReference>
<dbReference type="Pfam" id="PF04216">
    <property type="entry name" value="FdhE_N"/>
    <property type="match status" value="1"/>
</dbReference>
<dbReference type="PIRSF" id="PIRSF018296">
    <property type="entry name" value="Format_dh_formtn"/>
    <property type="match status" value="1"/>
</dbReference>
<dbReference type="SUPFAM" id="SSF144020">
    <property type="entry name" value="FdhE-like"/>
    <property type="match status" value="1"/>
</dbReference>
<keyword id="KW-0963">Cytoplasm</keyword>
<accession>A4WGB3</accession>
<reference key="1">
    <citation type="journal article" date="2010" name="PLoS Genet.">
        <title>Genome sequence of the plant growth promoting endophytic bacterium Enterobacter sp. 638.</title>
        <authorList>
            <person name="Taghavi S."/>
            <person name="van der Lelie D."/>
            <person name="Hoffman A."/>
            <person name="Zhang Y.B."/>
            <person name="Walla M.D."/>
            <person name="Vangronsveld J."/>
            <person name="Newman L."/>
            <person name="Monchy S."/>
        </authorList>
    </citation>
    <scope>NUCLEOTIDE SEQUENCE [LARGE SCALE GENOMIC DNA]</scope>
    <source>
        <strain>638</strain>
    </source>
</reference>
<feature type="chain" id="PRO_1000061293" description="Protein FdhE homolog">
    <location>
        <begin position="1"/>
        <end position="309"/>
    </location>
</feature>
<name>FDHE_ENT38</name>
<protein>
    <recommendedName>
        <fullName evidence="1">Protein FdhE homolog</fullName>
    </recommendedName>
</protein>
<gene>
    <name evidence="1" type="primary">fdhE</name>
    <name type="ordered locus">Ent638_4088</name>
</gene>